<sequence>MALWGGRFSQAADQRFKQFNDSLRFDYRLAEQDIIGSVAWSKALVTVGVLNADEQQQLEQALSVLLEEVQANPHAILASDAEDIHSWVETKLIDKVGDLGKKLHTGRSRNDQVATDLKLWCKFQITELQTAVQQLQQALVMTAEANQDAVMPGYTHLQRAQPVTFAHWCLAYVEMLSRDESRLQDTLKRLDVSPLGCGALAGTAYAIDREQLAGWLGFASATRNSLDSVSDRDHVLELLSDASIGMVHLSRFAEDLIFFNSGEAAFVDLSDRVTSGSSLMPQKKNPDALELIRGKCGRVQGALTGMMMTLKGLPLAYNKDMQEDKEGLFDALDTWLDCLHMAALVLDGIQVKRPRCKEAAEQGYANATELADYLVAKGVPFREAHHIVGEAVVEAIRQGKALEALALSDLQQFSSVIGDDVYPILALQSCLDKRVAKGGVSPQQVASAIAEAKARLF</sequence>
<accession>B1JQ59</accession>
<comment type="catalytic activity">
    <reaction evidence="1">
        <text>2-(N(omega)-L-arginino)succinate = fumarate + L-arginine</text>
        <dbReference type="Rhea" id="RHEA:24020"/>
        <dbReference type="ChEBI" id="CHEBI:29806"/>
        <dbReference type="ChEBI" id="CHEBI:32682"/>
        <dbReference type="ChEBI" id="CHEBI:57472"/>
        <dbReference type="EC" id="4.3.2.1"/>
    </reaction>
</comment>
<comment type="pathway">
    <text evidence="1">Amino-acid biosynthesis; L-arginine biosynthesis; L-arginine from L-ornithine and carbamoyl phosphate: step 3/3.</text>
</comment>
<comment type="subcellular location">
    <subcellularLocation>
        <location evidence="1">Cytoplasm</location>
    </subcellularLocation>
</comment>
<comment type="similarity">
    <text evidence="1">Belongs to the lyase 1 family. Argininosuccinate lyase subfamily.</text>
</comment>
<gene>
    <name evidence="1" type="primary">argH</name>
    <name type="ordered locus">YPK_4087</name>
</gene>
<name>ARLY_YERPY</name>
<keyword id="KW-0028">Amino-acid biosynthesis</keyword>
<keyword id="KW-0055">Arginine biosynthesis</keyword>
<keyword id="KW-0963">Cytoplasm</keyword>
<keyword id="KW-0456">Lyase</keyword>
<reference key="1">
    <citation type="submission" date="2008-02" db="EMBL/GenBank/DDBJ databases">
        <title>Complete sequence of Yersinia pseudotuberculosis YPIII.</title>
        <authorList>
            <consortium name="US DOE Joint Genome Institute"/>
            <person name="Copeland A."/>
            <person name="Lucas S."/>
            <person name="Lapidus A."/>
            <person name="Glavina del Rio T."/>
            <person name="Dalin E."/>
            <person name="Tice H."/>
            <person name="Bruce D."/>
            <person name="Goodwin L."/>
            <person name="Pitluck S."/>
            <person name="Munk A.C."/>
            <person name="Brettin T."/>
            <person name="Detter J.C."/>
            <person name="Han C."/>
            <person name="Tapia R."/>
            <person name="Schmutz J."/>
            <person name="Larimer F."/>
            <person name="Land M."/>
            <person name="Hauser L."/>
            <person name="Challacombe J.F."/>
            <person name="Green L."/>
            <person name="Lindler L.E."/>
            <person name="Nikolich M.P."/>
            <person name="Richardson P."/>
        </authorList>
    </citation>
    <scope>NUCLEOTIDE SEQUENCE [LARGE SCALE GENOMIC DNA]</scope>
    <source>
        <strain>YPIII</strain>
    </source>
</reference>
<evidence type="ECO:0000255" key="1">
    <source>
        <dbReference type="HAMAP-Rule" id="MF_00006"/>
    </source>
</evidence>
<organism>
    <name type="scientific">Yersinia pseudotuberculosis serotype O:3 (strain YPIII)</name>
    <dbReference type="NCBI Taxonomy" id="502800"/>
    <lineage>
        <taxon>Bacteria</taxon>
        <taxon>Pseudomonadati</taxon>
        <taxon>Pseudomonadota</taxon>
        <taxon>Gammaproteobacteria</taxon>
        <taxon>Enterobacterales</taxon>
        <taxon>Yersiniaceae</taxon>
        <taxon>Yersinia</taxon>
    </lineage>
</organism>
<proteinExistence type="inferred from homology"/>
<protein>
    <recommendedName>
        <fullName evidence="1">Argininosuccinate lyase</fullName>
        <shortName evidence="1">ASAL</shortName>
        <ecNumber evidence="1">4.3.2.1</ecNumber>
    </recommendedName>
    <alternativeName>
        <fullName evidence="1">Arginosuccinase</fullName>
    </alternativeName>
</protein>
<dbReference type="EC" id="4.3.2.1" evidence="1"/>
<dbReference type="EMBL" id="CP000950">
    <property type="protein sequence ID" value="ACA70346.1"/>
    <property type="molecule type" value="Genomic_DNA"/>
</dbReference>
<dbReference type="RefSeq" id="WP_012304750.1">
    <property type="nucleotide sequence ID" value="NZ_CP009792.1"/>
</dbReference>
<dbReference type="SMR" id="B1JQ59"/>
<dbReference type="KEGG" id="ypy:YPK_4087"/>
<dbReference type="PATRIC" id="fig|502800.11.peg.435"/>
<dbReference type="UniPathway" id="UPA00068">
    <property type="reaction ID" value="UER00114"/>
</dbReference>
<dbReference type="GO" id="GO:0005829">
    <property type="term" value="C:cytosol"/>
    <property type="evidence" value="ECO:0007669"/>
    <property type="project" value="TreeGrafter"/>
</dbReference>
<dbReference type="GO" id="GO:0004056">
    <property type="term" value="F:argininosuccinate lyase activity"/>
    <property type="evidence" value="ECO:0007669"/>
    <property type="project" value="UniProtKB-UniRule"/>
</dbReference>
<dbReference type="GO" id="GO:0042450">
    <property type="term" value="P:arginine biosynthetic process via ornithine"/>
    <property type="evidence" value="ECO:0007669"/>
    <property type="project" value="InterPro"/>
</dbReference>
<dbReference type="GO" id="GO:0006526">
    <property type="term" value="P:L-arginine biosynthetic process"/>
    <property type="evidence" value="ECO:0007669"/>
    <property type="project" value="UniProtKB-UniRule"/>
</dbReference>
<dbReference type="CDD" id="cd01359">
    <property type="entry name" value="Argininosuccinate_lyase"/>
    <property type="match status" value="1"/>
</dbReference>
<dbReference type="FunFam" id="1.10.275.10:FF:000004">
    <property type="entry name" value="Argininosuccinate lyase"/>
    <property type="match status" value="1"/>
</dbReference>
<dbReference type="FunFam" id="1.10.40.30:FF:000001">
    <property type="entry name" value="Argininosuccinate lyase"/>
    <property type="match status" value="1"/>
</dbReference>
<dbReference type="FunFam" id="1.20.200.10:FF:000006">
    <property type="entry name" value="Argininosuccinate lyase"/>
    <property type="match status" value="1"/>
</dbReference>
<dbReference type="Gene3D" id="1.10.40.30">
    <property type="entry name" value="Fumarase/aspartase (C-terminal domain)"/>
    <property type="match status" value="1"/>
</dbReference>
<dbReference type="Gene3D" id="1.20.200.10">
    <property type="entry name" value="Fumarase/aspartase (Central domain)"/>
    <property type="match status" value="1"/>
</dbReference>
<dbReference type="Gene3D" id="1.10.275.10">
    <property type="entry name" value="Fumarase/aspartase (N-terminal domain)"/>
    <property type="match status" value="1"/>
</dbReference>
<dbReference type="HAMAP" id="MF_00006">
    <property type="entry name" value="Arg_succ_lyase"/>
    <property type="match status" value="1"/>
</dbReference>
<dbReference type="InterPro" id="IPR029419">
    <property type="entry name" value="Arg_succ_lyase_C"/>
</dbReference>
<dbReference type="InterPro" id="IPR009049">
    <property type="entry name" value="Argininosuccinate_lyase"/>
</dbReference>
<dbReference type="InterPro" id="IPR024083">
    <property type="entry name" value="Fumarase/histidase_N"/>
</dbReference>
<dbReference type="InterPro" id="IPR020557">
    <property type="entry name" value="Fumarate_lyase_CS"/>
</dbReference>
<dbReference type="InterPro" id="IPR000362">
    <property type="entry name" value="Fumarate_lyase_fam"/>
</dbReference>
<dbReference type="InterPro" id="IPR022761">
    <property type="entry name" value="Fumarate_lyase_N"/>
</dbReference>
<dbReference type="InterPro" id="IPR008948">
    <property type="entry name" value="L-Aspartase-like"/>
</dbReference>
<dbReference type="NCBIfam" id="TIGR00838">
    <property type="entry name" value="argH"/>
    <property type="match status" value="1"/>
</dbReference>
<dbReference type="NCBIfam" id="NF008964">
    <property type="entry name" value="PRK12308.1"/>
    <property type="match status" value="1"/>
</dbReference>
<dbReference type="PANTHER" id="PTHR43814">
    <property type="entry name" value="ARGININOSUCCINATE LYASE"/>
    <property type="match status" value="1"/>
</dbReference>
<dbReference type="PANTHER" id="PTHR43814:SF1">
    <property type="entry name" value="ARGININOSUCCINATE LYASE"/>
    <property type="match status" value="1"/>
</dbReference>
<dbReference type="Pfam" id="PF14698">
    <property type="entry name" value="ASL_C2"/>
    <property type="match status" value="1"/>
</dbReference>
<dbReference type="Pfam" id="PF00206">
    <property type="entry name" value="Lyase_1"/>
    <property type="match status" value="1"/>
</dbReference>
<dbReference type="PRINTS" id="PR00145">
    <property type="entry name" value="ARGSUCLYASE"/>
</dbReference>
<dbReference type="PRINTS" id="PR00149">
    <property type="entry name" value="FUMRATELYASE"/>
</dbReference>
<dbReference type="SUPFAM" id="SSF48557">
    <property type="entry name" value="L-aspartase-like"/>
    <property type="match status" value="1"/>
</dbReference>
<dbReference type="PROSITE" id="PS00163">
    <property type="entry name" value="FUMARATE_LYASES"/>
    <property type="match status" value="1"/>
</dbReference>
<feature type="chain" id="PRO_1000089135" description="Argininosuccinate lyase">
    <location>
        <begin position="1"/>
        <end position="457"/>
    </location>
</feature>